<dbReference type="EMBL" id="CP000387">
    <property type="protein sequence ID" value="ABN43570.1"/>
    <property type="molecule type" value="Genomic_DNA"/>
</dbReference>
<dbReference type="RefSeq" id="WP_002894481.1">
    <property type="nucleotide sequence ID" value="NZ_CAXTYR010000005.1"/>
</dbReference>
<dbReference type="RefSeq" id="YP_001034120.1">
    <property type="nucleotide sequence ID" value="NC_009009.1"/>
</dbReference>
<dbReference type="SMR" id="A3CK65"/>
<dbReference type="STRING" id="388919.SSA_0109"/>
<dbReference type="KEGG" id="ssa:SSA_0109"/>
<dbReference type="PATRIC" id="fig|388919.9.peg.102"/>
<dbReference type="eggNOG" id="COG0089">
    <property type="taxonomic scope" value="Bacteria"/>
</dbReference>
<dbReference type="HOGENOM" id="CLU_037562_3_2_9"/>
<dbReference type="OrthoDB" id="9793353at2"/>
<dbReference type="Proteomes" id="UP000002148">
    <property type="component" value="Chromosome"/>
</dbReference>
<dbReference type="GO" id="GO:1990904">
    <property type="term" value="C:ribonucleoprotein complex"/>
    <property type="evidence" value="ECO:0007669"/>
    <property type="project" value="UniProtKB-KW"/>
</dbReference>
<dbReference type="GO" id="GO:0005840">
    <property type="term" value="C:ribosome"/>
    <property type="evidence" value="ECO:0007669"/>
    <property type="project" value="UniProtKB-KW"/>
</dbReference>
<dbReference type="GO" id="GO:0019843">
    <property type="term" value="F:rRNA binding"/>
    <property type="evidence" value="ECO:0007669"/>
    <property type="project" value="UniProtKB-UniRule"/>
</dbReference>
<dbReference type="GO" id="GO:0003735">
    <property type="term" value="F:structural constituent of ribosome"/>
    <property type="evidence" value="ECO:0007669"/>
    <property type="project" value="InterPro"/>
</dbReference>
<dbReference type="GO" id="GO:0006412">
    <property type="term" value="P:translation"/>
    <property type="evidence" value="ECO:0007669"/>
    <property type="project" value="UniProtKB-UniRule"/>
</dbReference>
<dbReference type="FunFam" id="3.30.70.330:FF:000001">
    <property type="entry name" value="50S ribosomal protein L23"/>
    <property type="match status" value="1"/>
</dbReference>
<dbReference type="Gene3D" id="3.30.70.330">
    <property type="match status" value="1"/>
</dbReference>
<dbReference type="HAMAP" id="MF_01369_B">
    <property type="entry name" value="Ribosomal_uL23_B"/>
    <property type="match status" value="1"/>
</dbReference>
<dbReference type="InterPro" id="IPR012677">
    <property type="entry name" value="Nucleotide-bd_a/b_plait_sf"/>
</dbReference>
<dbReference type="InterPro" id="IPR013025">
    <property type="entry name" value="Ribosomal_uL23-like"/>
</dbReference>
<dbReference type="InterPro" id="IPR012678">
    <property type="entry name" value="Ribosomal_uL23/eL15/eS24_sf"/>
</dbReference>
<dbReference type="InterPro" id="IPR001014">
    <property type="entry name" value="Ribosomal_uL23_CS"/>
</dbReference>
<dbReference type="NCBIfam" id="NF004361">
    <property type="entry name" value="PRK05738.2-1"/>
    <property type="match status" value="1"/>
</dbReference>
<dbReference type="NCBIfam" id="NF004363">
    <property type="entry name" value="PRK05738.2-4"/>
    <property type="match status" value="1"/>
</dbReference>
<dbReference type="PANTHER" id="PTHR11620">
    <property type="entry name" value="60S RIBOSOMAL PROTEIN L23A"/>
    <property type="match status" value="1"/>
</dbReference>
<dbReference type="Pfam" id="PF00276">
    <property type="entry name" value="Ribosomal_L23"/>
    <property type="match status" value="1"/>
</dbReference>
<dbReference type="SUPFAM" id="SSF54189">
    <property type="entry name" value="Ribosomal proteins S24e, L23 and L15e"/>
    <property type="match status" value="1"/>
</dbReference>
<dbReference type="PROSITE" id="PS00050">
    <property type="entry name" value="RIBOSOMAL_L23"/>
    <property type="match status" value="1"/>
</dbReference>
<name>RL23_STRSV</name>
<feature type="chain" id="PRO_1000068175" description="Large ribosomal subunit protein uL23">
    <location>
        <begin position="1"/>
        <end position="98"/>
    </location>
</feature>
<organism>
    <name type="scientific">Streptococcus sanguinis (strain SK36)</name>
    <dbReference type="NCBI Taxonomy" id="388919"/>
    <lineage>
        <taxon>Bacteria</taxon>
        <taxon>Bacillati</taxon>
        <taxon>Bacillota</taxon>
        <taxon>Bacilli</taxon>
        <taxon>Lactobacillales</taxon>
        <taxon>Streptococcaceae</taxon>
        <taxon>Streptococcus</taxon>
    </lineage>
</organism>
<comment type="function">
    <text evidence="1">One of the early assembly proteins it binds 23S rRNA. One of the proteins that surrounds the polypeptide exit tunnel on the outside of the ribosome. Forms the main docking site for trigger factor binding to the ribosome.</text>
</comment>
<comment type="subunit">
    <text evidence="1">Part of the 50S ribosomal subunit. Contacts protein L29, and trigger factor when it is bound to the ribosome.</text>
</comment>
<comment type="similarity">
    <text evidence="1">Belongs to the universal ribosomal protein uL23 family.</text>
</comment>
<accession>A3CK65</accession>
<gene>
    <name evidence="1" type="primary">rplW</name>
    <name type="ordered locus">SSA_0109</name>
</gene>
<evidence type="ECO:0000255" key="1">
    <source>
        <dbReference type="HAMAP-Rule" id="MF_01369"/>
    </source>
</evidence>
<evidence type="ECO:0000305" key="2"/>
<proteinExistence type="inferred from homology"/>
<reference key="1">
    <citation type="journal article" date="2007" name="J. Bacteriol.">
        <title>Genome of the opportunistic pathogen Streptococcus sanguinis.</title>
        <authorList>
            <person name="Xu P."/>
            <person name="Alves J.M."/>
            <person name="Kitten T."/>
            <person name="Brown A."/>
            <person name="Chen Z."/>
            <person name="Ozaki L.S."/>
            <person name="Manque P."/>
            <person name="Ge X."/>
            <person name="Serrano M.G."/>
            <person name="Puiu D."/>
            <person name="Hendricks S."/>
            <person name="Wang Y."/>
            <person name="Chaplin M.D."/>
            <person name="Akan D."/>
            <person name="Paik S."/>
            <person name="Peterson D.L."/>
            <person name="Macrina F.L."/>
            <person name="Buck G.A."/>
        </authorList>
    </citation>
    <scope>NUCLEOTIDE SEQUENCE [LARGE SCALE GENOMIC DNA]</scope>
    <source>
        <strain>SK36</strain>
    </source>
</reference>
<sequence>MNLYDVIKKPVITEGSMAQYEAGKYVFEVDTRAHKLLIKQAVEAAFEGVKVANVNTINVKPKAKRVGRYTGFTNKTKKAIVTLTADSKAIELFGAEEE</sequence>
<protein>
    <recommendedName>
        <fullName evidence="1">Large ribosomal subunit protein uL23</fullName>
    </recommendedName>
    <alternativeName>
        <fullName evidence="2">50S ribosomal protein L23</fullName>
    </alternativeName>
</protein>
<keyword id="KW-1185">Reference proteome</keyword>
<keyword id="KW-0687">Ribonucleoprotein</keyword>
<keyword id="KW-0689">Ribosomal protein</keyword>
<keyword id="KW-0694">RNA-binding</keyword>
<keyword id="KW-0699">rRNA-binding</keyword>